<proteinExistence type="inferred from homology"/>
<protein>
    <recommendedName>
        <fullName>Translation initiation factor 2 subunit beta</fullName>
    </recommendedName>
    <alternativeName>
        <fullName>aIF2-beta</fullName>
    </alternativeName>
    <alternativeName>
        <fullName>eIF-2-beta</fullName>
    </alternativeName>
</protein>
<feature type="chain" id="PRO_0000137431" description="Translation initiation factor 2 subunit beta">
    <location>
        <begin position="1"/>
        <end position="140"/>
    </location>
</feature>
<gene>
    <name type="primary">eif2b</name>
    <name type="ordered locus">PH0605</name>
</gene>
<keyword id="KW-0396">Initiation factor</keyword>
<keyword id="KW-0648">Protein biosynthesis</keyword>
<organism>
    <name type="scientific">Pyrococcus horikoshii (strain ATCC 700860 / DSM 12428 / JCM 9974 / NBRC 100139 / OT-3)</name>
    <dbReference type="NCBI Taxonomy" id="70601"/>
    <lineage>
        <taxon>Archaea</taxon>
        <taxon>Methanobacteriati</taxon>
        <taxon>Methanobacteriota</taxon>
        <taxon>Thermococci</taxon>
        <taxon>Thermococcales</taxon>
        <taxon>Thermococcaceae</taxon>
        <taxon>Pyrococcus</taxon>
    </lineage>
</organism>
<comment type="function">
    <text evidence="1">eIF-2 functions in the early steps of protein synthesis by forming a ternary complex with GTP and initiator tRNA.</text>
</comment>
<comment type="subunit">
    <text evidence="1">Heterotrimer composed of an alpha, a beta and a gamma chain.</text>
</comment>
<comment type="similarity">
    <text evidence="2">Belongs to the eIF-2-beta/eIF-5 family.</text>
</comment>
<dbReference type="EMBL" id="BA000001">
    <property type="protein sequence ID" value="BAA29694.1"/>
    <property type="molecule type" value="Genomic_DNA"/>
</dbReference>
<dbReference type="PIR" id="D71104">
    <property type="entry name" value="D71104"/>
</dbReference>
<dbReference type="RefSeq" id="WP_010884707.1">
    <property type="nucleotide sequence ID" value="NC_000961.1"/>
</dbReference>
<dbReference type="SMR" id="O58312"/>
<dbReference type="STRING" id="70601.gene:9377546"/>
<dbReference type="EnsemblBacteria" id="BAA29694">
    <property type="protein sequence ID" value="BAA29694"/>
    <property type="gene ID" value="BAA29694"/>
</dbReference>
<dbReference type="GeneID" id="1442941"/>
<dbReference type="KEGG" id="pho:PH0605"/>
<dbReference type="eggNOG" id="arCOG01640">
    <property type="taxonomic scope" value="Archaea"/>
</dbReference>
<dbReference type="OrthoDB" id="38099at2157"/>
<dbReference type="Proteomes" id="UP000000752">
    <property type="component" value="Chromosome"/>
</dbReference>
<dbReference type="GO" id="GO:0003743">
    <property type="term" value="F:translation initiation factor activity"/>
    <property type="evidence" value="ECO:0007669"/>
    <property type="project" value="UniProtKB-UniRule"/>
</dbReference>
<dbReference type="FunFam" id="3.30.30.170:FF:000001">
    <property type="entry name" value="Eukaryotic translation initiation factor 2 subunit"/>
    <property type="match status" value="1"/>
</dbReference>
<dbReference type="Gene3D" id="3.30.30.170">
    <property type="match status" value="1"/>
</dbReference>
<dbReference type="HAMAP" id="MF_00232">
    <property type="entry name" value="eIF_2_beta"/>
    <property type="match status" value="1"/>
</dbReference>
<dbReference type="InterPro" id="IPR045196">
    <property type="entry name" value="IF2/IF5"/>
</dbReference>
<dbReference type="InterPro" id="IPR004458">
    <property type="entry name" value="TIF2_bsu_arc"/>
</dbReference>
<dbReference type="InterPro" id="IPR002735">
    <property type="entry name" value="Transl_init_fac_IF2/IF5_dom"/>
</dbReference>
<dbReference type="InterPro" id="IPR016189">
    <property type="entry name" value="Transl_init_fac_IF2/IF5_N"/>
</dbReference>
<dbReference type="InterPro" id="IPR016190">
    <property type="entry name" value="Transl_init_fac_IF2/IF5_Zn-bd"/>
</dbReference>
<dbReference type="NCBIfam" id="TIGR00311">
    <property type="entry name" value="aIF-2beta"/>
    <property type="match status" value="1"/>
</dbReference>
<dbReference type="NCBIfam" id="NF003067">
    <property type="entry name" value="PRK03988.1"/>
    <property type="match status" value="1"/>
</dbReference>
<dbReference type="PANTHER" id="PTHR23001">
    <property type="entry name" value="EUKARYOTIC TRANSLATION INITIATION FACTOR"/>
    <property type="match status" value="1"/>
</dbReference>
<dbReference type="PANTHER" id="PTHR23001:SF3">
    <property type="entry name" value="EUKARYOTIC TRANSLATION INITIATION FACTOR 2 SUBUNIT 2"/>
    <property type="match status" value="1"/>
</dbReference>
<dbReference type="Pfam" id="PF01873">
    <property type="entry name" value="eIF-5_eIF-2B"/>
    <property type="match status" value="1"/>
</dbReference>
<dbReference type="SMART" id="SM00653">
    <property type="entry name" value="eIF2B_5"/>
    <property type="match status" value="1"/>
</dbReference>
<dbReference type="SUPFAM" id="SSF100966">
    <property type="entry name" value="Translation initiation factor 2 beta, aIF2beta, N-terminal domain"/>
    <property type="match status" value="1"/>
</dbReference>
<dbReference type="SUPFAM" id="SSF75689">
    <property type="entry name" value="Zinc-binding domain of translation initiation factor 2 beta"/>
    <property type="match status" value="1"/>
</dbReference>
<evidence type="ECO:0000250" key="1"/>
<evidence type="ECO:0000305" key="2"/>
<reference key="1">
    <citation type="journal article" date="1998" name="DNA Res.">
        <title>Complete sequence and gene organization of the genome of a hyper-thermophilic archaebacterium, Pyrococcus horikoshii OT3.</title>
        <authorList>
            <person name="Kawarabayasi Y."/>
            <person name="Sawada M."/>
            <person name="Horikawa H."/>
            <person name="Haikawa Y."/>
            <person name="Hino Y."/>
            <person name="Yamamoto S."/>
            <person name="Sekine M."/>
            <person name="Baba S."/>
            <person name="Kosugi H."/>
            <person name="Hosoyama A."/>
            <person name="Nagai Y."/>
            <person name="Sakai M."/>
            <person name="Ogura K."/>
            <person name="Otsuka R."/>
            <person name="Nakazawa H."/>
            <person name="Takamiya M."/>
            <person name="Ohfuku Y."/>
            <person name="Funahashi T."/>
            <person name="Tanaka T."/>
            <person name="Kudoh Y."/>
            <person name="Yamazaki J."/>
            <person name="Kushida N."/>
            <person name="Oguchi A."/>
            <person name="Aoki K."/>
            <person name="Yoshizawa T."/>
            <person name="Nakamura Y."/>
            <person name="Robb F.T."/>
            <person name="Horikoshi K."/>
            <person name="Masuchi Y."/>
            <person name="Shizuya H."/>
            <person name="Kikuchi H."/>
        </authorList>
    </citation>
    <scope>NUCLEOTIDE SEQUENCE [LARGE SCALE GENOMIC DNA]</scope>
    <source>
        <strain>ATCC 700860 / DSM 12428 / JCM 9974 / NBRC 100139 / OT-3</strain>
    </source>
</reference>
<sequence length="140" mass="16247">MEIDYYDYEKLLEKAYEELPENVKHHKSRFEVPGALVTIEGNKTIIENFKDIAEALNRDPQHLLKFLLREIATAGTLEGKRVVLQGRFTPYLIANKLKKYIKEYVICPVCGSPDTKIIKRDRFYFLKCEACGAETPIQHL</sequence>
<name>IF2B_PYRHO</name>
<accession>O58312</accession>